<protein>
    <recommendedName>
        <fullName evidence="1">Urease subunit gamma</fullName>
        <ecNumber evidence="1">3.5.1.5</ecNumber>
    </recommendedName>
    <alternativeName>
        <fullName evidence="1">Urea amidohydrolase subunit gamma</fullName>
    </alternativeName>
</protein>
<name>URE3_YERPS</name>
<keyword id="KW-0963">Cytoplasm</keyword>
<keyword id="KW-0378">Hydrolase</keyword>
<organism>
    <name type="scientific">Yersinia pseudotuberculosis serotype I (strain IP32953)</name>
    <dbReference type="NCBI Taxonomy" id="273123"/>
    <lineage>
        <taxon>Bacteria</taxon>
        <taxon>Pseudomonadati</taxon>
        <taxon>Pseudomonadota</taxon>
        <taxon>Gammaproteobacteria</taxon>
        <taxon>Enterobacterales</taxon>
        <taxon>Yersiniaceae</taxon>
        <taxon>Yersinia</taxon>
    </lineage>
</organism>
<dbReference type="EC" id="3.5.1.5" evidence="1"/>
<dbReference type="EMBL" id="U40842">
    <property type="protein sequence ID" value="AAA87852.2"/>
    <property type="molecule type" value="Genomic_DNA"/>
</dbReference>
<dbReference type="EMBL" id="BX936398">
    <property type="protein sequence ID" value="CAH22182.1"/>
    <property type="molecule type" value="Genomic_DNA"/>
</dbReference>
<dbReference type="RefSeq" id="WP_002215288.1">
    <property type="nucleotide sequence ID" value="NZ_CP009712.1"/>
</dbReference>
<dbReference type="SMR" id="P69995"/>
<dbReference type="KEGG" id="ypo:BZ17_3684"/>
<dbReference type="KEGG" id="yps:YPTB2944"/>
<dbReference type="PATRIC" id="fig|273123.14.peg.3862"/>
<dbReference type="UniPathway" id="UPA00258">
    <property type="reaction ID" value="UER00370"/>
</dbReference>
<dbReference type="Proteomes" id="UP000001011">
    <property type="component" value="Chromosome"/>
</dbReference>
<dbReference type="GO" id="GO:0005737">
    <property type="term" value="C:cytoplasm"/>
    <property type="evidence" value="ECO:0007669"/>
    <property type="project" value="UniProtKB-SubCell"/>
</dbReference>
<dbReference type="GO" id="GO:0016151">
    <property type="term" value="F:nickel cation binding"/>
    <property type="evidence" value="ECO:0007669"/>
    <property type="project" value="InterPro"/>
</dbReference>
<dbReference type="GO" id="GO:0009039">
    <property type="term" value="F:urease activity"/>
    <property type="evidence" value="ECO:0007669"/>
    <property type="project" value="UniProtKB-UniRule"/>
</dbReference>
<dbReference type="GO" id="GO:0043419">
    <property type="term" value="P:urea catabolic process"/>
    <property type="evidence" value="ECO:0007669"/>
    <property type="project" value="UniProtKB-UniRule"/>
</dbReference>
<dbReference type="CDD" id="cd00390">
    <property type="entry name" value="Urease_gamma"/>
    <property type="match status" value="1"/>
</dbReference>
<dbReference type="Gene3D" id="3.30.280.10">
    <property type="entry name" value="Urease, gamma-like subunit"/>
    <property type="match status" value="1"/>
</dbReference>
<dbReference type="HAMAP" id="MF_00739">
    <property type="entry name" value="Urease_gamma"/>
    <property type="match status" value="1"/>
</dbReference>
<dbReference type="InterPro" id="IPR012010">
    <property type="entry name" value="Urease_gamma"/>
</dbReference>
<dbReference type="InterPro" id="IPR002026">
    <property type="entry name" value="Urease_gamma/gamma-beta_su"/>
</dbReference>
<dbReference type="InterPro" id="IPR036463">
    <property type="entry name" value="Urease_gamma_sf"/>
</dbReference>
<dbReference type="InterPro" id="IPR050069">
    <property type="entry name" value="Urease_subunit"/>
</dbReference>
<dbReference type="NCBIfam" id="NF009712">
    <property type="entry name" value="PRK13241.1"/>
    <property type="match status" value="1"/>
</dbReference>
<dbReference type="NCBIfam" id="TIGR00193">
    <property type="entry name" value="urease_gam"/>
    <property type="match status" value="1"/>
</dbReference>
<dbReference type="PANTHER" id="PTHR33569">
    <property type="entry name" value="UREASE"/>
    <property type="match status" value="1"/>
</dbReference>
<dbReference type="PANTHER" id="PTHR33569:SF1">
    <property type="entry name" value="UREASE"/>
    <property type="match status" value="1"/>
</dbReference>
<dbReference type="Pfam" id="PF00547">
    <property type="entry name" value="Urease_gamma"/>
    <property type="match status" value="1"/>
</dbReference>
<dbReference type="PIRSF" id="PIRSF001223">
    <property type="entry name" value="Urease_gamma"/>
    <property type="match status" value="1"/>
</dbReference>
<dbReference type="SUPFAM" id="SSF54111">
    <property type="entry name" value="Urease, gamma-subunit"/>
    <property type="match status" value="1"/>
</dbReference>
<sequence>MQLTPREVEKLMIYTLSDVAFKRKARGLKLNYPEAVSIITVTAMEGARDGKSVEDVMKEASKVLTKDDVMDGVADLIPNVQVEAIFTDGSRLVTVHDPIK</sequence>
<reference key="1">
    <citation type="journal article" date="1997" name="Infect. Immun.">
        <title>Urease is not involved in the virulence of Yersinia pseudotuberculosis in mice.</title>
        <authorList>
            <person name="Riot B."/>
            <person name="Berche P."/>
            <person name="Simonet M."/>
        </authorList>
    </citation>
    <scope>NUCLEOTIDE SEQUENCE [GENOMIC DNA]</scope>
    <source>
        <strain>IP 2777</strain>
    </source>
</reference>
<reference key="2">
    <citation type="journal article" date="2004" name="Proc. Natl. Acad. Sci. U.S.A.">
        <title>Insights into the evolution of Yersinia pestis through whole-genome comparison with Yersinia pseudotuberculosis.</title>
        <authorList>
            <person name="Chain P.S.G."/>
            <person name="Carniel E."/>
            <person name="Larimer F.W."/>
            <person name="Lamerdin J."/>
            <person name="Stoutland P.O."/>
            <person name="Regala W.M."/>
            <person name="Georgescu A.M."/>
            <person name="Vergez L.M."/>
            <person name="Land M.L."/>
            <person name="Motin V.L."/>
            <person name="Brubaker R.R."/>
            <person name="Fowler J."/>
            <person name="Hinnebusch J."/>
            <person name="Marceau M."/>
            <person name="Medigue C."/>
            <person name="Simonet M."/>
            <person name="Chenal-Francisque V."/>
            <person name="Souza B."/>
            <person name="Dacheux D."/>
            <person name="Elliott J.M."/>
            <person name="Derbise A."/>
            <person name="Hauser L.J."/>
            <person name="Garcia E."/>
        </authorList>
    </citation>
    <scope>NUCLEOTIDE SEQUENCE [LARGE SCALE GENOMIC DNA]</scope>
    <source>
        <strain>IP32953</strain>
    </source>
</reference>
<accession>P69995</accession>
<accession>P52315</accession>
<accession>Q667P8</accession>
<accession>Q9ZFS0</accession>
<comment type="catalytic activity">
    <reaction evidence="1">
        <text>urea + 2 H2O + H(+) = hydrogencarbonate + 2 NH4(+)</text>
        <dbReference type="Rhea" id="RHEA:20557"/>
        <dbReference type="ChEBI" id="CHEBI:15377"/>
        <dbReference type="ChEBI" id="CHEBI:15378"/>
        <dbReference type="ChEBI" id="CHEBI:16199"/>
        <dbReference type="ChEBI" id="CHEBI:17544"/>
        <dbReference type="ChEBI" id="CHEBI:28938"/>
        <dbReference type="EC" id="3.5.1.5"/>
    </reaction>
</comment>
<comment type="pathway">
    <text evidence="1">Nitrogen metabolism; urea degradation; CO(2) and NH(3) from urea (urease route): step 1/1.</text>
</comment>
<comment type="subunit">
    <text evidence="1">Heterotrimer of UreA (gamma), UreB (beta) and UreC (alpha) subunits. Three heterotrimers associate to form the active enzyme.</text>
</comment>
<comment type="subcellular location">
    <subcellularLocation>
        <location evidence="1">Cytoplasm</location>
    </subcellularLocation>
</comment>
<comment type="similarity">
    <text evidence="1">Belongs to the urease gamma subunit family.</text>
</comment>
<feature type="chain" id="PRO_0000098067" description="Urease subunit gamma">
    <location>
        <begin position="1"/>
        <end position="100"/>
    </location>
</feature>
<evidence type="ECO:0000255" key="1">
    <source>
        <dbReference type="HAMAP-Rule" id="MF_00739"/>
    </source>
</evidence>
<proteinExistence type="inferred from homology"/>
<gene>
    <name evidence="1" type="primary">ureA</name>
    <name type="synonym">yeuA</name>
    <name type="ordered locus">YPTB2944</name>
</gene>